<evidence type="ECO:0000255" key="1"/>
<evidence type="ECO:0000256" key="2">
    <source>
        <dbReference type="SAM" id="MobiDB-lite"/>
    </source>
</evidence>
<evidence type="ECO:0000305" key="3"/>
<organism>
    <name type="scientific">Homo sapiens</name>
    <name type="common">Human</name>
    <dbReference type="NCBI Taxonomy" id="9606"/>
    <lineage>
        <taxon>Eukaryota</taxon>
        <taxon>Metazoa</taxon>
        <taxon>Chordata</taxon>
        <taxon>Craniata</taxon>
        <taxon>Vertebrata</taxon>
        <taxon>Euteleostomi</taxon>
        <taxon>Mammalia</taxon>
        <taxon>Eutheria</taxon>
        <taxon>Euarchontoglires</taxon>
        <taxon>Primates</taxon>
        <taxon>Haplorrhini</taxon>
        <taxon>Catarrhini</taxon>
        <taxon>Hominidae</taxon>
        <taxon>Homo</taxon>
    </lineage>
</organism>
<sequence length="558" mass="62346">MVDSGTEARARGKAEAGLQDGISGPATARVNGKTQAEAVAEAELKTESVTQAKAGDGAMTRTHTVTYREAMAVTREVIKVEDTTKTRVMVETKTKPLAERSIVPQTKSKAMPMSRVSTVTKSEVKVVAVIEANIRSYAKSHDKANTGSRPDRREETSIGMKSSDEDEENICSWFWTGEEPSVGSWFWPEEETSLQVYKPLPKIQEKPKPTHKPTLTIKQKVIAWSRARYIVLVPVEGGEQSLPPEGNWTLVETLIETPLGIRPLTKIPPYHGPYYQTLAEIKKQIRQREKYGPNPKACHCKSRGFSLEPKEFDKLVALLKLTKDPFIHEIATMIMGISPAYPFTQDIIHDVGITVMIENLVNNPNVKEHPGALSMVDDSSESSEEPKSGESYIHQVCKGIISCPLNSPVQLAGLKLLGHLSIKFEDHYVITSYIPDFLTLLNKGSVKTKFYVLKVFSCLSKNHANTRELISAKVLSSLVAPFNKNESKANILNIIEIFENINFQFKTKAKLFTKEKFTKSELISIFQEAKQFGQKLQDLAEHSDPEVRDKVIRLILKL</sequence>
<feature type="chain" id="PRO_0000191371" description="Armadillo repeat-containing X-linked protein 5">
    <location>
        <begin position="1"/>
        <end position="558"/>
    </location>
</feature>
<feature type="repeat" description="ARM 1" evidence="1">
    <location>
        <begin position="300"/>
        <end position="339"/>
    </location>
</feature>
<feature type="repeat" description="ARM 2" evidence="1">
    <location>
        <begin position="422"/>
        <end position="461"/>
    </location>
</feature>
<feature type="repeat" description="ARM 3" evidence="1">
    <location>
        <begin position="463"/>
        <end position="503"/>
    </location>
</feature>
<feature type="repeat" description="ARM 4" evidence="1">
    <location>
        <begin position="520"/>
        <end position="558"/>
    </location>
</feature>
<feature type="region of interest" description="Disordered" evidence="2">
    <location>
        <begin position="1"/>
        <end position="35"/>
    </location>
</feature>
<feature type="region of interest" description="Disordered" evidence="2">
    <location>
        <begin position="139"/>
        <end position="165"/>
    </location>
</feature>
<feature type="region of interest" description="Disordered" evidence="2">
    <location>
        <begin position="369"/>
        <end position="388"/>
    </location>
</feature>
<feature type="compositionally biased region" description="Basic and acidic residues" evidence="2">
    <location>
        <begin position="1"/>
        <end position="14"/>
    </location>
</feature>
<feature type="compositionally biased region" description="Basic and acidic residues" evidence="2">
    <location>
        <begin position="139"/>
        <end position="156"/>
    </location>
</feature>
<feature type="sequence conflict" description="In Ref. 2; BAB14367." evidence="3" ref="2">
    <original>I</original>
    <variation>V</variation>
    <location>
        <position position="337"/>
    </location>
</feature>
<feature type="sequence conflict" description="In Ref. 1; CAH18306." evidence="3" ref="1">
    <original>V</original>
    <variation>A</variation>
    <location>
        <position position="376"/>
    </location>
</feature>
<reference key="1">
    <citation type="journal article" date="2004" name="Nat. Genet.">
        <title>Complete sequencing and characterization of 21,243 full-length human cDNAs.</title>
        <authorList>
            <person name="Ota T."/>
            <person name="Suzuki Y."/>
            <person name="Nishikawa T."/>
            <person name="Otsuki T."/>
            <person name="Sugiyama T."/>
            <person name="Irie R."/>
            <person name="Wakamatsu A."/>
            <person name="Hayashi K."/>
            <person name="Sato H."/>
            <person name="Nagai K."/>
            <person name="Kimura K."/>
            <person name="Makita H."/>
            <person name="Sekine M."/>
            <person name="Obayashi M."/>
            <person name="Nishi T."/>
            <person name="Shibahara T."/>
            <person name="Tanaka T."/>
            <person name="Ishii S."/>
            <person name="Yamamoto J."/>
            <person name="Saito K."/>
            <person name="Kawai Y."/>
            <person name="Isono Y."/>
            <person name="Nakamura Y."/>
            <person name="Nagahari K."/>
            <person name="Murakami K."/>
            <person name="Yasuda T."/>
            <person name="Iwayanagi T."/>
            <person name="Wagatsuma M."/>
            <person name="Shiratori A."/>
            <person name="Sudo H."/>
            <person name="Hosoiri T."/>
            <person name="Kaku Y."/>
            <person name="Kodaira H."/>
            <person name="Kondo H."/>
            <person name="Sugawara M."/>
            <person name="Takahashi M."/>
            <person name="Kanda K."/>
            <person name="Yokoi T."/>
            <person name="Furuya T."/>
            <person name="Kikkawa E."/>
            <person name="Omura Y."/>
            <person name="Abe K."/>
            <person name="Kamihara K."/>
            <person name="Katsuta N."/>
            <person name="Sato K."/>
            <person name="Tanikawa M."/>
            <person name="Yamazaki M."/>
            <person name="Ninomiya K."/>
            <person name="Ishibashi T."/>
            <person name="Yamashita H."/>
            <person name="Murakawa K."/>
            <person name="Fujimori K."/>
            <person name="Tanai H."/>
            <person name="Kimata M."/>
            <person name="Watanabe M."/>
            <person name="Hiraoka S."/>
            <person name="Chiba Y."/>
            <person name="Ishida S."/>
            <person name="Ono Y."/>
            <person name="Takiguchi S."/>
            <person name="Watanabe S."/>
            <person name="Yosida M."/>
            <person name="Hotuta T."/>
            <person name="Kusano J."/>
            <person name="Kanehori K."/>
            <person name="Takahashi-Fujii A."/>
            <person name="Hara H."/>
            <person name="Tanase T.-O."/>
            <person name="Nomura Y."/>
            <person name="Togiya S."/>
            <person name="Komai F."/>
            <person name="Hara R."/>
            <person name="Takeuchi K."/>
            <person name="Arita M."/>
            <person name="Imose N."/>
            <person name="Musashino K."/>
            <person name="Yuuki H."/>
            <person name="Oshima A."/>
            <person name="Sasaki N."/>
            <person name="Aotsuka S."/>
            <person name="Yoshikawa Y."/>
            <person name="Matsunawa H."/>
            <person name="Ichihara T."/>
            <person name="Shiohata N."/>
            <person name="Sano S."/>
            <person name="Moriya S."/>
            <person name="Momiyama H."/>
            <person name="Satoh N."/>
            <person name="Takami S."/>
            <person name="Terashima Y."/>
            <person name="Suzuki O."/>
            <person name="Nakagawa S."/>
            <person name="Senoh A."/>
            <person name="Mizoguchi H."/>
            <person name="Goto Y."/>
            <person name="Shimizu F."/>
            <person name="Wakebe H."/>
            <person name="Hishigaki H."/>
            <person name="Watanabe T."/>
            <person name="Sugiyama A."/>
            <person name="Takemoto M."/>
            <person name="Kawakami B."/>
            <person name="Yamazaki M."/>
            <person name="Watanabe K."/>
            <person name="Kumagai A."/>
            <person name="Itakura S."/>
            <person name="Fukuzumi Y."/>
            <person name="Fujimori Y."/>
            <person name="Komiyama M."/>
            <person name="Tashiro H."/>
            <person name="Tanigami A."/>
            <person name="Fujiwara T."/>
            <person name="Ono T."/>
            <person name="Yamada K."/>
            <person name="Fujii Y."/>
            <person name="Ozaki K."/>
            <person name="Hirao M."/>
            <person name="Ohmori Y."/>
            <person name="Kawabata A."/>
            <person name="Hikiji T."/>
            <person name="Kobatake N."/>
            <person name="Inagaki H."/>
            <person name="Ikema Y."/>
            <person name="Okamoto S."/>
            <person name="Okitani R."/>
            <person name="Kawakami T."/>
            <person name="Noguchi S."/>
            <person name="Itoh T."/>
            <person name="Shigeta K."/>
            <person name="Senba T."/>
            <person name="Matsumura K."/>
            <person name="Nakajima Y."/>
            <person name="Mizuno T."/>
            <person name="Morinaga M."/>
            <person name="Sasaki M."/>
            <person name="Togashi T."/>
            <person name="Oyama M."/>
            <person name="Hata H."/>
            <person name="Watanabe M."/>
            <person name="Komatsu T."/>
            <person name="Mizushima-Sugano J."/>
            <person name="Satoh T."/>
            <person name="Shirai Y."/>
            <person name="Takahashi Y."/>
            <person name="Nakagawa K."/>
            <person name="Okumura K."/>
            <person name="Nagase T."/>
            <person name="Nomura N."/>
            <person name="Kikuchi H."/>
            <person name="Masuho Y."/>
            <person name="Yamashita R."/>
            <person name="Nakai K."/>
            <person name="Yada T."/>
            <person name="Nakamura Y."/>
            <person name="Ohara O."/>
            <person name="Isogai T."/>
            <person name="Sugano S."/>
        </authorList>
    </citation>
    <scope>NUCLEOTIDE SEQUENCE [LARGE SCALE MRNA]</scope>
</reference>
<reference key="2">
    <citation type="journal article" date="2007" name="BMC Genomics">
        <title>The full-ORF clone resource of the German cDNA consortium.</title>
        <authorList>
            <person name="Bechtel S."/>
            <person name="Rosenfelder H."/>
            <person name="Duda A."/>
            <person name="Schmidt C.P."/>
            <person name="Ernst U."/>
            <person name="Wellenreuther R."/>
            <person name="Mehrle A."/>
            <person name="Schuster C."/>
            <person name="Bahr A."/>
            <person name="Bloecker H."/>
            <person name="Heubner D."/>
            <person name="Hoerlein A."/>
            <person name="Michel G."/>
            <person name="Wedler H."/>
            <person name="Koehrer K."/>
            <person name="Ottenwaelder B."/>
            <person name="Poustka A."/>
            <person name="Wiemann S."/>
            <person name="Schupp I."/>
        </authorList>
    </citation>
    <scope>NUCLEOTIDE SEQUENCE [LARGE SCALE MRNA]</scope>
    <source>
        <tissue>Esophageal carcinoma</tissue>
    </source>
</reference>
<reference key="3">
    <citation type="journal article" date="2005" name="Nature">
        <title>The DNA sequence of the human X chromosome.</title>
        <authorList>
            <person name="Ross M.T."/>
            <person name="Grafham D.V."/>
            <person name="Coffey A.J."/>
            <person name="Scherer S."/>
            <person name="McLay K."/>
            <person name="Muzny D."/>
            <person name="Platzer M."/>
            <person name="Howell G.R."/>
            <person name="Burrows C."/>
            <person name="Bird C.P."/>
            <person name="Frankish A."/>
            <person name="Lovell F.L."/>
            <person name="Howe K.L."/>
            <person name="Ashurst J.L."/>
            <person name="Fulton R.S."/>
            <person name="Sudbrak R."/>
            <person name="Wen G."/>
            <person name="Jones M.C."/>
            <person name="Hurles M.E."/>
            <person name="Andrews T.D."/>
            <person name="Scott C.E."/>
            <person name="Searle S."/>
            <person name="Ramser J."/>
            <person name="Whittaker A."/>
            <person name="Deadman R."/>
            <person name="Carter N.P."/>
            <person name="Hunt S.E."/>
            <person name="Chen R."/>
            <person name="Cree A."/>
            <person name="Gunaratne P."/>
            <person name="Havlak P."/>
            <person name="Hodgson A."/>
            <person name="Metzker M.L."/>
            <person name="Richards S."/>
            <person name="Scott G."/>
            <person name="Steffen D."/>
            <person name="Sodergren E."/>
            <person name="Wheeler D.A."/>
            <person name="Worley K.C."/>
            <person name="Ainscough R."/>
            <person name="Ambrose K.D."/>
            <person name="Ansari-Lari M.A."/>
            <person name="Aradhya S."/>
            <person name="Ashwell R.I."/>
            <person name="Babbage A.K."/>
            <person name="Bagguley C.L."/>
            <person name="Ballabio A."/>
            <person name="Banerjee R."/>
            <person name="Barker G.E."/>
            <person name="Barlow K.F."/>
            <person name="Barrett I.P."/>
            <person name="Bates K.N."/>
            <person name="Beare D.M."/>
            <person name="Beasley H."/>
            <person name="Beasley O."/>
            <person name="Beck A."/>
            <person name="Bethel G."/>
            <person name="Blechschmidt K."/>
            <person name="Brady N."/>
            <person name="Bray-Allen S."/>
            <person name="Bridgeman A.M."/>
            <person name="Brown A.J."/>
            <person name="Brown M.J."/>
            <person name="Bonnin D."/>
            <person name="Bruford E.A."/>
            <person name="Buhay C."/>
            <person name="Burch P."/>
            <person name="Burford D."/>
            <person name="Burgess J."/>
            <person name="Burrill W."/>
            <person name="Burton J."/>
            <person name="Bye J.M."/>
            <person name="Carder C."/>
            <person name="Carrel L."/>
            <person name="Chako J."/>
            <person name="Chapman J.C."/>
            <person name="Chavez D."/>
            <person name="Chen E."/>
            <person name="Chen G."/>
            <person name="Chen Y."/>
            <person name="Chen Z."/>
            <person name="Chinault C."/>
            <person name="Ciccodicola A."/>
            <person name="Clark S.Y."/>
            <person name="Clarke G."/>
            <person name="Clee C.M."/>
            <person name="Clegg S."/>
            <person name="Clerc-Blankenburg K."/>
            <person name="Clifford K."/>
            <person name="Cobley V."/>
            <person name="Cole C.G."/>
            <person name="Conquer J.S."/>
            <person name="Corby N."/>
            <person name="Connor R.E."/>
            <person name="David R."/>
            <person name="Davies J."/>
            <person name="Davis C."/>
            <person name="Davis J."/>
            <person name="Delgado O."/>
            <person name="Deshazo D."/>
            <person name="Dhami P."/>
            <person name="Ding Y."/>
            <person name="Dinh H."/>
            <person name="Dodsworth S."/>
            <person name="Draper H."/>
            <person name="Dugan-Rocha S."/>
            <person name="Dunham A."/>
            <person name="Dunn M."/>
            <person name="Durbin K.J."/>
            <person name="Dutta I."/>
            <person name="Eades T."/>
            <person name="Ellwood M."/>
            <person name="Emery-Cohen A."/>
            <person name="Errington H."/>
            <person name="Evans K.L."/>
            <person name="Faulkner L."/>
            <person name="Francis F."/>
            <person name="Frankland J."/>
            <person name="Fraser A.E."/>
            <person name="Galgoczy P."/>
            <person name="Gilbert J."/>
            <person name="Gill R."/>
            <person name="Gloeckner G."/>
            <person name="Gregory S.G."/>
            <person name="Gribble S."/>
            <person name="Griffiths C."/>
            <person name="Grocock R."/>
            <person name="Gu Y."/>
            <person name="Gwilliam R."/>
            <person name="Hamilton C."/>
            <person name="Hart E.A."/>
            <person name="Hawes A."/>
            <person name="Heath P.D."/>
            <person name="Heitmann K."/>
            <person name="Hennig S."/>
            <person name="Hernandez J."/>
            <person name="Hinzmann B."/>
            <person name="Ho S."/>
            <person name="Hoffs M."/>
            <person name="Howden P.J."/>
            <person name="Huckle E.J."/>
            <person name="Hume J."/>
            <person name="Hunt P.J."/>
            <person name="Hunt A.R."/>
            <person name="Isherwood J."/>
            <person name="Jacob L."/>
            <person name="Johnson D."/>
            <person name="Jones S."/>
            <person name="de Jong P.J."/>
            <person name="Joseph S.S."/>
            <person name="Keenan S."/>
            <person name="Kelly S."/>
            <person name="Kershaw J.K."/>
            <person name="Khan Z."/>
            <person name="Kioschis P."/>
            <person name="Klages S."/>
            <person name="Knights A.J."/>
            <person name="Kosiura A."/>
            <person name="Kovar-Smith C."/>
            <person name="Laird G.K."/>
            <person name="Langford C."/>
            <person name="Lawlor S."/>
            <person name="Leversha M."/>
            <person name="Lewis L."/>
            <person name="Liu W."/>
            <person name="Lloyd C."/>
            <person name="Lloyd D.M."/>
            <person name="Loulseged H."/>
            <person name="Loveland J.E."/>
            <person name="Lovell J.D."/>
            <person name="Lozado R."/>
            <person name="Lu J."/>
            <person name="Lyne R."/>
            <person name="Ma J."/>
            <person name="Maheshwari M."/>
            <person name="Matthews L.H."/>
            <person name="McDowall J."/>
            <person name="McLaren S."/>
            <person name="McMurray A."/>
            <person name="Meidl P."/>
            <person name="Meitinger T."/>
            <person name="Milne S."/>
            <person name="Miner G."/>
            <person name="Mistry S.L."/>
            <person name="Morgan M."/>
            <person name="Morris S."/>
            <person name="Mueller I."/>
            <person name="Mullikin J.C."/>
            <person name="Nguyen N."/>
            <person name="Nordsiek G."/>
            <person name="Nyakatura G."/>
            <person name="O'dell C.N."/>
            <person name="Okwuonu G."/>
            <person name="Palmer S."/>
            <person name="Pandian R."/>
            <person name="Parker D."/>
            <person name="Parrish J."/>
            <person name="Pasternak S."/>
            <person name="Patel D."/>
            <person name="Pearce A.V."/>
            <person name="Pearson D.M."/>
            <person name="Pelan S.E."/>
            <person name="Perez L."/>
            <person name="Porter K.M."/>
            <person name="Ramsey Y."/>
            <person name="Reichwald K."/>
            <person name="Rhodes S."/>
            <person name="Ridler K.A."/>
            <person name="Schlessinger D."/>
            <person name="Schueler M.G."/>
            <person name="Sehra H.K."/>
            <person name="Shaw-Smith C."/>
            <person name="Shen H."/>
            <person name="Sheridan E.M."/>
            <person name="Shownkeen R."/>
            <person name="Skuce C.D."/>
            <person name="Smith M.L."/>
            <person name="Sotheran E.C."/>
            <person name="Steingruber H.E."/>
            <person name="Steward C.A."/>
            <person name="Storey R."/>
            <person name="Swann R.M."/>
            <person name="Swarbreck D."/>
            <person name="Tabor P.E."/>
            <person name="Taudien S."/>
            <person name="Taylor T."/>
            <person name="Teague B."/>
            <person name="Thomas K."/>
            <person name="Thorpe A."/>
            <person name="Timms K."/>
            <person name="Tracey A."/>
            <person name="Trevanion S."/>
            <person name="Tromans A.C."/>
            <person name="d'Urso M."/>
            <person name="Verduzco D."/>
            <person name="Villasana D."/>
            <person name="Waldron L."/>
            <person name="Wall M."/>
            <person name="Wang Q."/>
            <person name="Warren J."/>
            <person name="Warry G.L."/>
            <person name="Wei X."/>
            <person name="West A."/>
            <person name="Whitehead S.L."/>
            <person name="Whiteley M.N."/>
            <person name="Wilkinson J.E."/>
            <person name="Willey D.L."/>
            <person name="Williams G."/>
            <person name="Williams L."/>
            <person name="Williamson A."/>
            <person name="Williamson H."/>
            <person name="Wilming L."/>
            <person name="Woodmansey R.L."/>
            <person name="Wray P.W."/>
            <person name="Yen J."/>
            <person name="Zhang J."/>
            <person name="Zhou J."/>
            <person name="Zoghbi H."/>
            <person name="Zorilla S."/>
            <person name="Buck D."/>
            <person name="Reinhardt R."/>
            <person name="Poustka A."/>
            <person name="Rosenthal A."/>
            <person name="Lehrach H."/>
            <person name="Meindl A."/>
            <person name="Minx P.J."/>
            <person name="Hillier L.W."/>
            <person name="Willard H.F."/>
            <person name="Wilson R.K."/>
            <person name="Waterston R.H."/>
            <person name="Rice C.M."/>
            <person name="Vaudin M."/>
            <person name="Coulson A."/>
            <person name="Nelson D.L."/>
            <person name="Weinstock G."/>
            <person name="Sulston J.E."/>
            <person name="Durbin R.M."/>
            <person name="Hubbard T."/>
            <person name="Gibbs R.A."/>
            <person name="Beck S."/>
            <person name="Rogers J."/>
            <person name="Bentley D.R."/>
        </authorList>
    </citation>
    <scope>NUCLEOTIDE SEQUENCE [LARGE SCALE GENOMIC DNA]</scope>
</reference>
<reference key="4">
    <citation type="submission" date="2005-09" db="EMBL/GenBank/DDBJ databases">
        <authorList>
            <person name="Mural R.J."/>
            <person name="Istrail S."/>
            <person name="Sutton G.G."/>
            <person name="Florea L."/>
            <person name="Halpern A.L."/>
            <person name="Mobarry C.M."/>
            <person name="Lippert R."/>
            <person name="Walenz B."/>
            <person name="Shatkay H."/>
            <person name="Dew I."/>
            <person name="Miller J.R."/>
            <person name="Flanigan M.J."/>
            <person name="Edwards N.J."/>
            <person name="Bolanos R."/>
            <person name="Fasulo D."/>
            <person name="Halldorsson B.V."/>
            <person name="Hannenhalli S."/>
            <person name="Turner R."/>
            <person name="Yooseph S."/>
            <person name="Lu F."/>
            <person name="Nusskern D.R."/>
            <person name="Shue B.C."/>
            <person name="Zheng X.H."/>
            <person name="Zhong F."/>
            <person name="Delcher A.L."/>
            <person name="Huson D.H."/>
            <person name="Kravitz S.A."/>
            <person name="Mouchard L."/>
            <person name="Reinert K."/>
            <person name="Remington K.A."/>
            <person name="Clark A.G."/>
            <person name="Waterman M.S."/>
            <person name="Eichler E.E."/>
            <person name="Adams M.D."/>
            <person name="Hunkapiller M.W."/>
            <person name="Myers E.W."/>
            <person name="Venter J.C."/>
        </authorList>
    </citation>
    <scope>NUCLEOTIDE SEQUENCE [LARGE SCALE GENOMIC DNA]</scope>
</reference>
<reference key="5">
    <citation type="journal article" date="2004" name="Genome Res.">
        <title>The status, quality, and expansion of the NIH full-length cDNA project: the Mammalian Gene Collection (MGC).</title>
        <authorList>
            <consortium name="The MGC Project Team"/>
        </authorList>
    </citation>
    <scope>NUCLEOTIDE SEQUENCE [LARGE SCALE MRNA]</scope>
    <source>
        <tissue>Muscle</tissue>
        <tissue>Placenta</tissue>
        <tissue>Uterus</tissue>
    </source>
</reference>
<accession>Q6P1M9</accession>
<accession>B3KU88</accession>
<accession>D3DX99</accession>
<accession>Q68DB4</accession>
<accession>Q9BVZ3</accession>
<accession>Q9H969</accession>
<proteinExistence type="evidence at protein level"/>
<protein>
    <recommendedName>
        <fullName>Armadillo repeat-containing X-linked protein 5</fullName>
    </recommendedName>
</protein>
<dbReference type="EMBL" id="AK023031">
    <property type="protein sequence ID" value="BAB14367.1"/>
    <property type="molecule type" value="mRNA"/>
</dbReference>
<dbReference type="EMBL" id="AK096692">
    <property type="protein sequence ID" value="BAG53350.1"/>
    <property type="molecule type" value="mRNA"/>
</dbReference>
<dbReference type="EMBL" id="CR749476">
    <property type="protein sequence ID" value="CAH18306.1"/>
    <property type="molecule type" value="mRNA"/>
</dbReference>
<dbReference type="EMBL" id="AL035551">
    <property type="status" value="NOT_ANNOTATED_CDS"/>
    <property type="molecule type" value="Genomic_DNA"/>
</dbReference>
<dbReference type="EMBL" id="CH471190">
    <property type="protein sequence ID" value="EAW54733.1"/>
    <property type="molecule type" value="Genomic_DNA"/>
</dbReference>
<dbReference type="EMBL" id="CH471190">
    <property type="protein sequence ID" value="EAW54734.1"/>
    <property type="molecule type" value="Genomic_DNA"/>
</dbReference>
<dbReference type="EMBL" id="BC000792">
    <property type="protein sequence ID" value="AAH00792.1"/>
    <property type="molecule type" value="mRNA"/>
</dbReference>
<dbReference type="EMBL" id="BC058904">
    <property type="protein sequence ID" value="AAH58904.1"/>
    <property type="molecule type" value="mRNA"/>
</dbReference>
<dbReference type="EMBL" id="BC064983">
    <property type="protein sequence ID" value="AAH64983.1"/>
    <property type="molecule type" value="mRNA"/>
</dbReference>
<dbReference type="CCDS" id="CCDS14500.1"/>
<dbReference type="RefSeq" id="NP_001161950.1">
    <property type="nucleotide sequence ID" value="NM_001168478.2"/>
</dbReference>
<dbReference type="RefSeq" id="NP_001161951.1">
    <property type="nucleotide sequence ID" value="NM_001168479.2"/>
</dbReference>
<dbReference type="RefSeq" id="NP_001161952.1">
    <property type="nucleotide sequence ID" value="NM_001168480.2"/>
</dbReference>
<dbReference type="RefSeq" id="NP_001161954.1">
    <property type="nucleotide sequence ID" value="NM_001168482.2"/>
</dbReference>
<dbReference type="RefSeq" id="NP_001161957.1">
    <property type="nucleotide sequence ID" value="NM_001168485.2"/>
</dbReference>
<dbReference type="RefSeq" id="NP_073749.2">
    <property type="nucleotide sequence ID" value="NM_022838.3"/>
</dbReference>
<dbReference type="SMR" id="Q6P1M9"/>
<dbReference type="BioGRID" id="122333">
    <property type="interactions" value="34"/>
</dbReference>
<dbReference type="FunCoup" id="Q6P1M9">
    <property type="interactions" value="48"/>
</dbReference>
<dbReference type="IntAct" id="Q6P1M9">
    <property type="interactions" value="22"/>
</dbReference>
<dbReference type="STRING" id="9606.ENSP00000474720"/>
<dbReference type="GlyCosmos" id="Q6P1M9">
    <property type="glycosylation" value="4 sites, 1 glycan"/>
</dbReference>
<dbReference type="GlyGen" id="Q6P1M9">
    <property type="glycosylation" value="4 sites, 1 O-linked glycan (4 sites)"/>
</dbReference>
<dbReference type="iPTMnet" id="Q6P1M9"/>
<dbReference type="PhosphoSitePlus" id="Q6P1M9"/>
<dbReference type="BioMuta" id="ARMCX5"/>
<dbReference type="DMDM" id="74749066"/>
<dbReference type="jPOST" id="Q6P1M9"/>
<dbReference type="MassIVE" id="Q6P1M9"/>
<dbReference type="PaxDb" id="9606-ENSP00000474720"/>
<dbReference type="PeptideAtlas" id="Q6P1M9"/>
<dbReference type="ProteomicsDB" id="66854"/>
<dbReference type="Pumba" id="Q6P1M9"/>
<dbReference type="Antibodypedia" id="384">
    <property type="antibodies" value="44 antibodies from 13 providers"/>
</dbReference>
<dbReference type="DNASU" id="64860"/>
<dbReference type="Ensembl" id="ENST00000246174.6">
    <property type="protein sequence ID" value="ENSP00000246174.2"/>
    <property type="gene ID" value="ENSG00000125962.16"/>
</dbReference>
<dbReference type="Ensembl" id="ENST00000372742.1">
    <property type="protein sequence ID" value="ENSP00000361827.1"/>
    <property type="gene ID" value="ENSG00000125962.16"/>
</dbReference>
<dbReference type="Ensembl" id="ENST00000473968.7">
    <property type="protein sequence ID" value="ENSP00000473737.2"/>
    <property type="gene ID" value="ENSG00000125962.16"/>
</dbReference>
<dbReference type="Ensembl" id="ENST00000477663.6">
    <property type="protein sequence ID" value="ENSP00000474484.2"/>
    <property type="gene ID" value="ENSG00000125962.16"/>
</dbReference>
<dbReference type="Ensembl" id="ENST00000479502.2">
    <property type="protein sequence ID" value="ENSP00000474470.2"/>
    <property type="gene ID" value="ENSG00000125962.16"/>
</dbReference>
<dbReference type="Ensembl" id="ENST00000604957.1">
    <property type="protein sequence ID" value="ENSP00000474720.1"/>
    <property type="gene ID" value="ENSG00000125962.16"/>
</dbReference>
<dbReference type="GeneID" id="64860"/>
<dbReference type="KEGG" id="hsa:64860"/>
<dbReference type="MANE-Select" id="ENST00000473968.7">
    <property type="protein sequence ID" value="ENSP00000473737.2"/>
    <property type="RefSeq nucleotide sequence ID" value="NM_001168478.2"/>
    <property type="RefSeq protein sequence ID" value="NP_001161950.1"/>
</dbReference>
<dbReference type="UCSC" id="uc004ejg.4">
    <property type="organism name" value="human"/>
</dbReference>
<dbReference type="AGR" id="HGNC:25772"/>
<dbReference type="CTD" id="64860"/>
<dbReference type="GeneCards" id="ARMCX5"/>
<dbReference type="HGNC" id="HGNC:25772">
    <property type="gene designation" value="ARMCX5"/>
</dbReference>
<dbReference type="HPA" id="ENSG00000125962">
    <property type="expression patterns" value="Low tissue specificity"/>
</dbReference>
<dbReference type="MIM" id="301047">
    <property type="type" value="gene"/>
</dbReference>
<dbReference type="neXtProt" id="NX_Q6P1M9"/>
<dbReference type="OpenTargets" id="ENSG00000125962"/>
<dbReference type="PharmGKB" id="PA134910322"/>
<dbReference type="VEuPathDB" id="HostDB:ENSG00000125962"/>
<dbReference type="eggNOG" id="ENOG502RK9I">
    <property type="taxonomic scope" value="Eukaryota"/>
</dbReference>
<dbReference type="GeneTree" id="ENSGT00940000163081"/>
<dbReference type="HOGENOM" id="CLU_037187_2_0_1"/>
<dbReference type="InParanoid" id="Q6P1M9"/>
<dbReference type="OMA" id="NPKACRC"/>
<dbReference type="OrthoDB" id="9530227at2759"/>
<dbReference type="PAN-GO" id="Q6P1M9">
    <property type="GO annotations" value="0 GO annotations based on evolutionary models"/>
</dbReference>
<dbReference type="PhylomeDB" id="Q6P1M9"/>
<dbReference type="TreeFam" id="TF335652"/>
<dbReference type="PathwayCommons" id="Q6P1M9"/>
<dbReference type="SignaLink" id="Q6P1M9"/>
<dbReference type="BioGRID-ORCS" id="64860">
    <property type="hits" value="9 hits in 774 CRISPR screens"/>
</dbReference>
<dbReference type="GenomeRNAi" id="64860"/>
<dbReference type="Pharos" id="Q6P1M9">
    <property type="development level" value="Tdark"/>
</dbReference>
<dbReference type="PRO" id="PR:Q6P1M9"/>
<dbReference type="Proteomes" id="UP000005640">
    <property type="component" value="Chromosome X"/>
</dbReference>
<dbReference type="RNAct" id="Q6P1M9">
    <property type="molecule type" value="protein"/>
</dbReference>
<dbReference type="Bgee" id="ENSG00000125962">
    <property type="expression patterns" value="Expressed in islet of Langerhans and 183 other cell types or tissues"/>
</dbReference>
<dbReference type="ExpressionAtlas" id="Q6P1M9">
    <property type="expression patterns" value="baseline and differential"/>
</dbReference>
<dbReference type="Gene3D" id="1.25.10.10">
    <property type="entry name" value="Leucine-rich Repeat Variant"/>
    <property type="match status" value="1"/>
</dbReference>
<dbReference type="InterPro" id="IPR011989">
    <property type="entry name" value="ARM-like"/>
</dbReference>
<dbReference type="InterPro" id="IPR006911">
    <property type="entry name" value="ARM-rpt_dom"/>
</dbReference>
<dbReference type="InterPro" id="IPR016024">
    <property type="entry name" value="ARM-type_fold"/>
</dbReference>
<dbReference type="PANTHER" id="PTHR47081">
    <property type="match status" value="1"/>
</dbReference>
<dbReference type="PANTHER" id="PTHR47081:SF2">
    <property type="entry name" value="ARMADILLO REPEAT-CONTAINING X-LINKED PROTEIN 5"/>
    <property type="match status" value="1"/>
</dbReference>
<dbReference type="Pfam" id="PF04826">
    <property type="entry name" value="Arm_2"/>
    <property type="match status" value="1"/>
</dbReference>
<dbReference type="SUPFAM" id="SSF48371">
    <property type="entry name" value="ARM repeat"/>
    <property type="match status" value="1"/>
</dbReference>
<comment type="interaction">
    <interactant intactId="EBI-10252512">
        <id>Q6P1M9</id>
    </interactant>
    <interactant intactId="EBI-743771">
        <id>Q92624</id>
        <label>APPBP2</label>
    </interactant>
    <organismsDiffer>false</organismsDiffer>
    <experiments>6</experiments>
</comment>
<comment type="interaction">
    <interactant intactId="EBI-10252512">
        <id>Q6P1M9</id>
    </interactant>
    <interactant intactId="EBI-466029">
        <id>P42858</id>
        <label>HTT</label>
    </interactant>
    <organismsDiffer>false</organismsDiffer>
    <experiments>6</experiments>
</comment>
<comment type="similarity">
    <text evidence="3">Belongs to the eutherian X-chromosome-specific Armcx family.</text>
</comment>
<keyword id="KW-1267">Proteomics identification</keyword>
<keyword id="KW-1185">Reference proteome</keyword>
<keyword id="KW-0677">Repeat</keyword>
<gene>
    <name type="primary">ARMCX5</name>
</gene>
<name>ARMX5_HUMAN</name>